<comment type="function">
    <text evidence="1">Catalyzes the ATP-dependent phosphorylation of L-homoserine to L-homoserine phosphate.</text>
</comment>
<comment type="catalytic activity">
    <reaction evidence="1">
        <text>L-homoserine + ATP = O-phospho-L-homoserine + ADP + H(+)</text>
        <dbReference type="Rhea" id="RHEA:13985"/>
        <dbReference type="ChEBI" id="CHEBI:15378"/>
        <dbReference type="ChEBI" id="CHEBI:30616"/>
        <dbReference type="ChEBI" id="CHEBI:57476"/>
        <dbReference type="ChEBI" id="CHEBI:57590"/>
        <dbReference type="ChEBI" id="CHEBI:456216"/>
        <dbReference type="EC" id="2.7.1.39"/>
    </reaction>
</comment>
<comment type="pathway">
    <text evidence="1">Amino-acid biosynthesis; L-threonine biosynthesis; L-threonine from L-aspartate: step 4/5.</text>
</comment>
<comment type="subcellular location">
    <subcellularLocation>
        <location evidence="1">Cytoplasm</location>
    </subcellularLocation>
</comment>
<comment type="similarity">
    <text evidence="1">Belongs to the GHMP kinase family. Homoserine kinase subfamily.</text>
</comment>
<name>KHSE_SACI3</name>
<gene>
    <name evidence="1" type="primary">thrB</name>
    <name type="ordered locus">M1627_0164</name>
</gene>
<protein>
    <recommendedName>
        <fullName evidence="1">Homoserine kinase</fullName>
        <shortName evidence="1">HK</shortName>
        <shortName evidence="1">HSK</shortName>
        <ecNumber evidence="1">2.7.1.39</ecNumber>
    </recommendedName>
</protein>
<dbReference type="EC" id="2.7.1.39" evidence="1"/>
<dbReference type="EMBL" id="CP001401">
    <property type="protein sequence ID" value="ACP54194.1"/>
    <property type="molecule type" value="Genomic_DNA"/>
</dbReference>
<dbReference type="RefSeq" id="WP_012710342.1">
    <property type="nucleotide sequence ID" value="NC_012632.1"/>
</dbReference>
<dbReference type="SMR" id="C3N0N3"/>
<dbReference type="KEGG" id="sim:M1627_0164"/>
<dbReference type="HOGENOM" id="CLU_041243_1_1_2"/>
<dbReference type="UniPathway" id="UPA00050">
    <property type="reaction ID" value="UER00064"/>
</dbReference>
<dbReference type="Proteomes" id="UP000002307">
    <property type="component" value="Chromosome"/>
</dbReference>
<dbReference type="GO" id="GO:0005737">
    <property type="term" value="C:cytoplasm"/>
    <property type="evidence" value="ECO:0007669"/>
    <property type="project" value="UniProtKB-SubCell"/>
</dbReference>
<dbReference type="GO" id="GO:0005524">
    <property type="term" value="F:ATP binding"/>
    <property type="evidence" value="ECO:0007669"/>
    <property type="project" value="UniProtKB-UniRule"/>
</dbReference>
<dbReference type="GO" id="GO:0004413">
    <property type="term" value="F:homoserine kinase activity"/>
    <property type="evidence" value="ECO:0007669"/>
    <property type="project" value="UniProtKB-UniRule"/>
</dbReference>
<dbReference type="GO" id="GO:0009088">
    <property type="term" value="P:threonine biosynthetic process"/>
    <property type="evidence" value="ECO:0007669"/>
    <property type="project" value="UniProtKB-UniRule"/>
</dbReference>
<dbReference type="Gene3D" id="3.30.230.10">
    <property type="match status" value="1"/>
</dbReference>
<dbReference type="Gene3D" id="3.30.70.890">
    <property type="entry name" value="GHMP kinase, C-terminal domain"/>
    <property type="match status" value="1"/>
</dbReference>
<dbReference type="HAMAP" id="MF_00384">
    <property type="entry name" value="Homoser_kinase"/>
    <property type="match status" value="1"/>
</dbReference>
<dbReference type="InterPro" id="IPR013750">
    <property type="entry name" value="GHMP_kinase_C_dom"/>
</dbReference>
<dbReference type="InterPro" id="IPR036554">
    <property type="entry name" value="GHMP_kinase_C_sf"/>
</dbReference>
<dbReference type="InterPro" id="IPR006204">
    <property type="entry name" value="GHMP_kinase_N_dom"/>
</dbReference>
<dbReference type="InterPro" id="IPR006203">
    <property type="entry name" value="GHMP_knse_ATP-bd_CS"/>
</dbReference>
<dbReference type="InterPro" id="IPR000870">
    <property type="entry name" value="Homoserine_kinase"/>
</dbReference>
<dbReference type="InterPro" id="IPR020568">
    <property type="entry name" value="Ribosomal_Su5_D2-typ_SF"/>
</dbReference>
<dbReference type="InterPro" id="IPR014721">
    <property type="entry name" value="Ribsml_uS5_D2-typ_fold_subgr"/>
</dbReference>
<dbReference type="NCBIfam" id="NF002288">
    <property type="entry name" value="PRK01212.1-4"/>
    <property type="match status" value="1"/>
</dbReference>
<dbReference type="NCBIfam" id="TIGR00191">
    <property type="entry name" value="thrB"/>
    <property type="match status" value="1"/>
</dbReference>
<dbReference type="PANTHER" id="PTHR20861:SF1">
    <property type="entry name" value="HOMOSERINE KINASE"/>
    <property type="match status" value="1"/>
</dbReference>
<dbReference type="PANTHER" id="PTHR20861">
    <property type="entry name" value="HOMOSERINE/4-DIPHOSPHOCYTIDYL-2-C-METHYL-D-ERYTHRITOL KINASE"/>
    <property type="match status" value="1"/>
</dbReference>
<dbReference type="Pfam" id="PF08544">
    <property type="entry name" value="GHMP_kinases_C"/>
    <property type="match status" value="1"/>
</dbReference>
<dbReference type="Pfam" id="PF00288">
    <property type="entry name" value="GHMP_kinases_N"/>
    <property type="match status" value="1"/>
</dbReference>
<dbReference type="PIRSF" id="PIRSF000676">
    <property type="entry name" value="Homoser_kin"/>
    <property type="match status" value="1"/>
</dbReference>
<dbReference type="PRINTS" id="PR00958">
    <property type="entry name" value="HOMSERKINASE"/>
</dbReference>
<dbReference type="SUPFAM" id="SSF55060">
    <property type="entry name" value="GHMP Kinase, C-terminal domain"/>
    <property type="match status" value="1"/>
</dbReference>
<dbReference type="SUPFAM" id="SSF54211">
    <property type="entry name" value="Ribosomal protein S5 domain 2-like"/>
    <property type="match status" value="1"/>
</dbReference>
<dbReference type="PROSITE" id="PS00627">
    <property type="entry name" value="GHMP_KINASES_ATP"/>
    <property type="match status" value="1"/>
</dbReference>
<organism>
    <name type="scientific">Saccharolobus islandicus (strain M.16.27)</name>
    <name type="common">Sulfolobus islandicus</name>
    <dbReference type="NCBI Taxonomy" id="427318"/>
    <lineage>
        <taxon>Archaea</taxon>
        <taxon>Thermoproteota</taxon>
        <taxon>Thermoprotei</taxon>
        <taxon>Sulfolobales</taxon>
        <taxon>Sulfolobaceae</taxon>
        <taxon>Saccharolobus</taxon>
    </lineage>
</organism>
<evidence type="ECO:0000255" key="1">
    <source>
        <dbReference type="HAMAP-Rule" id="MF_00384"/>
    </source>
</evidence>
<reference key="1">
    <citation type="journal article" date="2009" name="Proc. Natl. Acad. Sci. U.S.A.">
        <title>Biogeography of the Sulfolobus islandicus pan-genome.</title>
        <authorList>
            <person name="Reno M.L."/>
            <person name="Held N.L."/>
            <person name="Fields C.J."/>
            <person name="Burke P.V."/>
            <person name="Whitaker R.J."/>
        </authorList>
    </citation>
    <scope>NUCLEOTIDE SEQUENCE [LARGE SCALE GENOMIC DNA]</scope>
    <source>
        <strain>M.16.27</strain>
    </source>
</reference>
<sequence>MECKRARAYSSSANLGSGFDILSMAHTAFFDTVEICVETKNSENIVIESNSKIPLEPNRNSATYPLVRIMEERGIKASLRVKVIKGIPEGLGLGSSGASATAAVMAFSSLFNLNLSKEDLVRYAMYGEIASSGSPHPDNVAASVFGGVVSVVSVNPVKVVEIPLNYSFNILLFVPLNVHIEEKTKKAREMVPKTVKLSDYINNSRYISSLLIGFVKGERDLIRLGLNDEIVEKARLPLFPYYPKIKEIAIKYDAVGSCVSGAGPSILVLTDKMTDENKIAEEGTKTCNEFNVECEVIKAKIAGGVEVERRN</sequence>
<feature type="chain" id="PRO_1000205741" description="Homoserine kinase">
    <location>
        <begin position="1"/>
        <end position="311"/>
    </location>
</feature>
<feature type="binding site" evidence="1">
    <location>
        <begin position="88"/>
        <end position="98"/>
    </location>
    <ligand>
        <name>ATP</name>
        <dbReference type="ChEBI" id="CHEBI:30616"/>
    </ligand>
</feature>
<accession>C3N0N3</accession>
<proteinExistence type="inferred from homology"/>
<keyword id="KW-0028">Amino-acid biosynthesis</keyword>
<keyword id="KW-0067">ATP-binding</keyword>
<keyword id="KW-0963">Cytoplasm</keyword>
<keyword id="KW-0418">Kinase</keyword>
<keyword id="KW-0547">Nucleotide-binding</keyword>
<keyword id="KW-0791">Threonine biosynthesis</keyword>
<keyword id="KW-0808">Transferase</keyword>